<evidence type="ECO:0000256" key="1">
    <source>
        <dbReference type="SAM" id="MobiDB-lite"/>
    </source>
</evidence>
<evidence type="ECO:0000305" key="2"/>
<sequence length="255" mass="28610">MGISHSIVVALRSVLKQCGLKIATKTLEGFVREIDRVAPWYACSGSLTVASWDKLKGDLVREQQKGKLKAGIIPLWKLVKSCLTDEDCQQMVEAGQKVLDEIQESLSEVERGEKVKVERKQSALKNLGLSTGLEPEEKRYKGKNALGEIRKRDEKGEKKGDRAGEAHKERSLYPPLVEFKQLTLSNSEPDEGVSTSEETDSEEEAVRYKGERYQQDKMATQPRKRQKAADESQLAAWPPDCRLQGPSAPPLYVQR</sequence>
<accession>P31790</accession>
<dbReference type="EMBL" id="M73818">
    <property type="status" value="NOT_ANNOTATED_CDS"/>
    <property type="molecule type" value="mRNA"/>
</dbReference>
<dbReference type="PIR" id="B41305">
    <property type="entry name" value="FOMSIE"/>
</dbReference>
<dbReference type="GO" id="GO:0005198">
    <property type="term" value="F:structural molecule activity"/>
    <property type="evidence" value="ECO:0007669"/>
    <property type="project" value="InterPro"/>
</dbReference>
<dbReference type="Gene3D" id="1.10.150.490">
    <property type="entry name" value="Retroviral GAG p10 protein"/>
    <property type="match status" value="1"/>
</dbReference>
<dbReference type="InterPro" id="IPR003322">
    <property type="entry name" value="B_retro_matrix"/>
</dbReference>
<dbReference type="InterPro" id="IPR038124">
    <property type="entry name" value="B_retro_matrix_sf"/>
</dbReference>
<dbReference type="InterPro" id="IPR010999">
    <property type="entry name" value="Retrovr_matrix"/>
</dbReference>
<dbReference type="Pfam" id="PF02337">
    <property type="entry name" value="Gag_p10"/>
    <property type="match status" value="1"/>
</dbReference>
<dbReference type="SUPFAM" id="SSF47836">
    <property type="entry name" value="Retroviral matrix proteins"/>
    <property type="match status" value="1"/>
</dbReference>
<proteinExistence type="evidence at transcript level"/>
<comment type="miscellaneous">
    <text evidence="2">Intracisternal A-particle Gag-related polyprotein: Intracisternal A particles (IAPs) are defective retroviral elements. Due to extensive mutations in the envelope coding sequence, IAPs can only form defective viral particles confined to the intracisternae of the Golgi. IAPs are an important class of transposable elements that induce genomic mutations and cell transformation by disrupting gene expression.</text>
</comment>
<comment type="miscellaneous">
    <text>Readthrough of the terminator UAA occurs between the codons for Met-218 and Ala-219.</text>
</comment>
<gene>
    <name type="primary">gag</name>
</gene>
<organism>
    <name type="scientific">Mouse intracisternal a-particle MIAE</name>
    <name type="common">IAP-MIAE</name>
    <dbReference type="NCBI Taxonomy" id="11932"/>
    <lineage>
        <taxon>Viruses</taxon>
        <taxon>Riboviria</taxon>
        <taxon>Pararnavirae</taxon>
        <taxon>Artverviricota</taxon>
        <taxon>Revtraviricetes</taxon>
        <taxon>Ortervirales</taxon>
        <taxon>Retroviridae</taxon>
        <taxon>Intracisternal A-particles</taxon>
    </lineage>
</organism>
<organismHost>
    <name type="scientific">Mus musculus</name>
    <name type="common">Mouse</name>
    <dbReference type="NCBI Taxonomy" id="10090"/>
</organismHost>
<feature type="chain" id="PRO_0000125479" description="Intracisternal A-particle Gag-related polyprotein">
    <location>
        <begin position="1"/>
        <end position="255"/>
    </location>
</feature>
<feature type="region of interest" description="Disordered" evidence="1">
    <location>
        <begin position="135"/>
        <end position="255"/>
    </location>
</feature>
<feature type="compositionally biased region" description="Basic and acidic residues" evidence="1">
    <location>
        <begin position="148"/>
        <end position="171"/>
    </location>
</feature>
<feature type="compositionally biased region" description="Basic and acidic residues" evidence="1">
    <location>
        <begin position="204"/>
        <end position="215"/>
    </location>
</feature>
<keyword id="KW-0814">Transposable element</keyword>
<name>GAG_IPMAE</name>
<reference key="1">
    <citation type="journal article" date="1991" name="J. Virol.">
        <title>cDNA sequence and genomic characterization of intracisternal A-particle-related retroviral elements containing an envelope gene.</title>
        <authorList>
            <person name="Reuss F.U."/>
            <person name="Schaller H.C."/>
        </authorList>
    </citation>
    <scope>NUCLEOTIDE SEQUENCE [MRNA]</scope>
</reference>
<protein>
    <recommendedName>
        <fullName>Intracisternal A-particle Gag-related polyprotein</fullName>
    </recommendedName>
</protein>